<dbReference type="EMBL" id="CU329670">
    <property type="protein sequence ID" value="CAB56126.1"/>
    <property type="molecule type" value="Genomic_DNA"/>
</dbReference>
<dbReference type="PIR" id="T38043">
    <property type="entry name" value="T38043"/>
</dbReference>
<dbReference type="SMR" id="Q10149"/>
<dbReference type="BioGRID" id="278913">
    <property type="interactions" value="34"/>
</dbReference>
<dbReference type="FunCoup" id="Q10149">
    <property type="interactions" value="261"/>
</dbReference>
<dbReference type="STRING" id="284812.Q10149"/>
<dbReference type="iPTMnet" id="Q10149"/>
<dbReference type="PaxDb" id="4896-SPAC1D4.02c.1"/>
<dbReference type="EnsemblFungi" id="SPAC1D4.02c.1">
    <property type="protein sequence ID" value="SPAC1D4.02c.1:pep"/>
    <property type="gene ID" value="SPAC1D4.02c"/>
</dbReference>
<dbReference type="KEGG" id="spo:2542452"/>
<dbReference type="PomBase" id="SPAC1D4.02c"/>
<dbReference type="VEuPathDB" id="FungiDB:SPAC1D4.02c"/>
<dbReference type="eggNOG" id="KOG3834">
    <property type="taxonomic scope" value="Eukaryota"/>
</dbReference>
<dbReference type="HOGENOM" id="CLU_025095_0_0_1"/>
<dbReference type="InParanoid" id="Q10149"/>
<dbReference type="OMA" id="SSTQHIW"/>
<dbReference type="PhylomeDB" id="Q10149"/>
<dbReference type="Reactome" id="R-SPO-162658">
    <property type="pathway name" value="Golgi Cisternae Pericentriolar Stack Reorganization"/>
</dbReference>
<dbReference type="Reactome" id="R-SPO-204005">
    <property type="pathway name" value="COPII-mediated vesicle transport"/>
</dbReference>
<dbReference type="PRO" id="PR:Q10149"/>
<dbReference type="Proteomes" id="UP000002485">
    <property type="component" value="Chromosome I"/>
</dbReference>
<dbReference type="GO" id="GO:0032153">
    <property type="term" value="C:cell division site"/>
    <property type="evidence" value="ECO:0007005"/>
    <property type="project" value="PomBase"/>
</dbReference>
<dbReference type="GO" id="GO:0051286">
    <property type="term" value="C:cell tip"/>
    <property type="evidence" value="ECO:0007005"/>
    <property type="project" value="PomBase"/>
</dbReference>
<dbReference type="GO" id="GO:0005829">
    <property type="term" value="C:cytosol"/>
    <property type="evidence" value="ECO:0007005"/>
    <property type="project" value="PomBase"/>
</dbReference>
<dbReference type="GO" id="GO:0005794">
    <property type="term" value="C:Golgi apparatus"/>
    <property type="evidence" value="ECO:0000318"/>
    <property type="project" value="GO_Central"/>
</dbReference>
<dbReference type="GO" id="GO:0000139">
    <property type="term" value="C:Golgi membrane"/>
    <property type="evidence" value="ECO:0007669"/>
    <property type="project" value="UniProtKB-SubCell"/>
</dbReference>
<dbReference type="GO" id="GO:0005634">
    <property type="term" value="C:nucleus"/>
    <property type="evidence" value="ECO:0007005"/>
    <property type="project" value="PomBase"/>
</dbReference>
<dbReference type="GO" id="GO:0006888">
    <property type="term" value="P:endoplasmic reticulum to Golgi vesicle-mediated transport"/>
    <property type="evidence" value="ECO:0000266"/>
    <property type="project" value="PomBase"/>
</dbReference>
<dbReference type="GO" id="GO:0007030">
    <property type="term" value="P:Golgi organization"/>
    <property type="evidence" value="ECO:0000318"/>
    <property type="project" value="GO_Central"/>
</dbReference>
<dbReference type="FunFam" id="2.30.42.10:FF:000026">
    <property type="entry name" value="Golgi reassembly stacking protein 2"/>
    <property type="match status" value="1"/>
</dbReference>
<dbReference type="Gene3D" id="2.30.42.10">
    <property type="match status" value="2"/>
</dbReference>
<dbReference type="InterPro" id="IPR007583">
    <property type="entry name" value="GRASP55_65"/>
</dbReference>
<dbReference type="InterPro" id="IPR024958">
    <property type="entry name" value="GRASP_PDZ"/>
</dbReference>
<dbReference type="InterPro" id="IPR036034">
    <property type="entry name" value="PDZ_sf"/>
</dbReference>
<dbReference type="PANTHER" id="PTHR12893">
    <property type="entry name" value="GOLGI REASSEMBLY STACKING PROTEIN GRASP"/>
    <property type="match status" value="1"/>
</dbReference>
<dbReference type="PANTHER" id="PTHR12893:SF0">
    <property type="entry name" value="GRASP65"/>
    <property type="match status" value="1"/>
</dbReference>
<dbReference type="Pfam" id="PF04495">
    <property type="entry name" value="GRASP55_65"/>
    <property type="match status" value="1"/>
</dbReference>
<dbReference type="SUPFAM" id="SSF50156">
    <property type="entry name" value="PDZ domain-like"/>
    <property type="match status" value="1"/>
</dbReference>
<dbReference type="PROSITE" id="PS51865">
    <property type="entry name" value="PDZ_GRASP"/>
    <property type="match status" value="2"/>
</dbReference>
<feature type="chain" id="PRO_0000116467" description="Uncharacterized protein C1D4.02c">
    <location>
        <begin position="1"/>
        <end position="345"/>
    </location>
</feature>
<feature type="domain" description="PDZ GRASP-type 1" evidence="1">
    <location>
        <begin position="27"/>
        <end position="112"/>
    </location>
</feature>
<feature type="domain" description="PDZ GRASP-type 2" evidence="1">
    <location>
        <begin position="118"/>
        <end position="207"/>
    </location>
</feature>
<feature type="region of interest" description="GRASP" evidence="2">
    <location>
        <begin position="27"/>
        <end position="223"/>
    </location>
</feature>
<feature type="region of interest" description="Disordered" evidence="3">
    <location>
        <begin position="229"/>
        <end position="345"/>
    </location>
</feature>
<feature type="compositionally biased region" description="Basic and acidic residues" evidence="3">
    <location>
        <begin position="297"/>
        <end position="308"/>
    </location>
</feature>
<feature type="compositionally biased region" description="Polar residues" evidence="3">
    <location>
        <begin position="309"/>
        <end position="318"/>
    </location>
</feature>
<feature type="compositionally biased region" description="Polar residues" evidence="3">
    <location>
        <begin position="328"/>
        <end position="338"/>
    </location>
</feature>
<name>YAT2_SCHPO</name>
<reference key="1">
    <citation type="journal article" date="2002" name="Nature">
        <title>The genome sequence of Schizosaccharomyces pombe.</title>
        <authorList>
            <person name="Wood V."/>
            <person name="Gwilliam R."/>
            <person name="Rajandream M.A."/>
            <person name="Lyne M.H."/>
            <person name="Lyne R."/>
            <person name="Stewart A."/>
            <person name="Sgouros J.G."/>
            <person name="Peat N."/>
            <person name="Hayles J."/>
            <person name="Baker S.G."/>
            <person name="Basham D."/>
            <person name="Bowman S."/>
            <person name="Brooks K."/>
            <person name="Brown D."/>
            <person name="Brown S."/>
            <person name="Chillingworth T."/>
            <person name="Churcher C.M."/>
            <person name="Collins M."/>
            <person name="Connor R."/>
            <person name="Cronin A."/>
            <person name="Davis P."/>
            <person name="Feltwell T."/>
            <person name="Fraser A."/>
            <person name="Gentles S."/>
            <person name="Goble A."/>
            <person name="Hamlin N."/>
            <person name="Harris D.E."/>
            <person name="Hidalgo J."/>
            <person name="Hodgson G."/>
            <person name="Holroyd S."/>
            <person name="Hornsby T."/>
            <person name="Howarth S."/>
            <person name="Huckle E.J."/>
            <person name="Hunt S."/>
            <person name="Jagels K."/>
            <person name="James K.D."/>
            <person name="Jones L."/>
            <person name="Jones M."/>
            <person name="Leather S."/>
            <person name="McDonald S."/>
            <person name="McLean J."/>
            <person name="Mooney P."/>
            <person name="Moule S."/>
            <person name="Mungall K.L."/>
            <person name="Murphy L.D."/>
            <person name="Niblett D."/>
            <person name="Odell C."/>
            <person name="Oliver K."/>
            <person name="O'Neil S."/>
            <person name="Pearson D."/>
            <person name="Quail M.A."/>
            <person name="Rabbinowitsch E."/>
            <person name="Rutherford K.M."/>
            <person name="Rutter S."/>
            <person name="Saunders D."/>
            <person name="Seeger K."/>
            <person name="Sharp S."/>
            <person name="Skelton J."/>
            <person name="Simmonds M.N."/>
            <person name="Squares R."/>
            <person name="Squares S."/>
            <person name="Stevens K."/>
            <person name="Taylor K."/>
            <person name="Taylor R.G."/>
            <person name="Tivey A."/>
            <person name="Walsh S.V."/>
            <person name="Warren T."/>
            <person name="Whitehead S."/>
            <person name="Woodward J.R."/>
            <person name="Volckaert G."/>
            <person name="Aert R."/>
            <person name="Robben J."/>
            <person name="Grymonprez B."/>
            <person name="Weltjens I."/>
            <person name="Vanstreels E."/>
            <person name="Rieger M."/>
            <person name="Schaefer M."/>
            <person name="Mueller-Auer S."/>
            <person name="Gabel C."/>
            <person name="Fuchs M."/>
            <person name="Duesterhoeft A."/>
            <person name="Fritzc C."/>
            <person name="Holzer E."/>
            <person name="Moestl D."/>
            <person name="Hilbert H."/>
            <person name="Borzym K."/>
            <person name="Langer I."/>
            <person name="Beck A."/>
            <person name="Lehrach H."/>
            <person name="Reinhardt R."/>
            <person name="Pohl T.M."/>
            <person name="Eger P."/>
            <person name="Zimmermann W."/>
            <person name="Wedler H."/>
            <person name="Wambutt R."/>
            <person name="Purnelle B."/>
            <person name="Goffeau A."/>
            <person name="Cadieu E."/>
            <person name="Dreano S."/>
            <person name="Gloux S."/>
            <person name="Lelaure V."/>
            <person name="Mottier S."/>
            <person name="Galibert F."/>
            <person name="Aves S.J."/>
            <person name="Xiang Z."/>
            <person name="Hunt C."/>
            <person name="Moore K."/>
            <person name="Hurst S.M."/>
            <person name="Lucas M."/>
            <person name="Rochet M."/>
            <person name="Gaillardin C."/>
            <person name="Tallada V.A."/>
            <person name="Garzon A."/>
            <person name="Thode G."/>
            <person name="Daga R.R."/>
            <person name="Cruzado L."/>
            <person name="Jimenez J."/>
            <person name="Sanchez M."/>
            <person name="del Rey F."/>
            <person name="Benito J."/>
            <person name="Dominguez A."/>
            <person name="Revuelta J.L."/>
            <person name="Moreno S."/>
            <person name="Armstrong J."/>
            <person name="Forsburg S.L."/>
            <person name="Cerutti L."/>
            <person name="Lowe T."/>
            <person name="McCombie W.R."/>
            <person name="Paulsen I."/>
            <person name="Potashkin J."/>
            <person name="Shpakovski G.V."/>
            <person name="Ussery D."/>
            <person name="Barrell B.G."/>
            <person name="Nurse P."/>
        </authorList>
    </citation>
    <scope>NUCLEOTIDE SEQUENCE [LARGE SCALE GENOMIC DNA]</scope>
    <source>
        <strain>972 / ATCC 24843</strain>
    </source>
</reference>
<protein>
    <recommendedName>
        <fullName>Uncharacterized protein C1D4.02c</fullName>
    </recommendedName>
</protein>
<proteinExistence type="inferred from homology"/>
<organism>
    <name type="scientific">Schizosaccharomyces pombe (strain 972 / ATCC 24843)</name>
    <name type="common">Fission yeast</name>
    <dbReference type="NCBI Taxonomy" id="284812"/>
    <lineage>
        <taxon>Eukaryota</taxon>
        <taxon>Fungi</taxon>
        <taxon>Dikarya</taxon>
        <taxon>Ascomycota</taxon>
        <taxon>Taphrinomycotina</taxon>
        <taxon>Schizosaccharomycetes</taxon>
        <taxon>Schizosaccharomycetales</taxon>
        <taxon>Schizosaccharomycetaceae</taxon>
        <taxon>Schizosaccharomyces</taxon>
    </lineage>
</organism>
<accession>Q10149</accession>
<evidence type="ECO:0000255" key="1">
    <source>
        <dbReference type="PROSITE-ProRule" id="PRU01212"/>
    </source>
</evidence>
<evidence type="ECO:0000255" key="2">
    <source>
        <dbReference type="PROSITE-ProRule" id="PRU01214"/>
    </source>
</evidence>
<evidence type="ECO:0000256" key="3">
    <source>
        <dbReference type="SAM" id="MobiDB-lite"/>
    </source>
</evidence>
<sequence>MFGGLKNFIKEKSEALAGIHRESDESCGFRVLKVENDSKAYNARIESYYDFITAVNGILLNGDPSMFMALLRDSSPEVTLEVFSLKGQITRKVNIKINSDEKIGMVLQWASIAPAVDAIWHILNVIDDSPVARASLVPYEDYIVGTPEGMMTGEKALSDLIESHLNRPLRLYIYNHYRDSTRQVTIVPNRHWGGNGAIGCGVGHGVLHRLPAPLSGPPPQPGDIVFSNPMLGGPDHKVSQPSETENFLPTPEPPKIASANAGSSNEISIPHYQRHKKSHKGAIQDSSIQSYLDEEEKLSRELDHKTKDASSTNDSQTTPLPPPPPVAVNSTNDESAPQNEELVKN</sequence>
<comment type="subcellular location">
    <subcellularLocation>
        <location evidence="1">Golgi apparatus membrane</location>
    </subcellularLocation>
</comment>
<gene>
    <name type="ORF">SPAC1D4.02c</name>
</gene>
<keyword id="KW-0333">Golgi apparatus</keyword>
<keyword id="KW-0472">Membrane</keyword>
<keyword id="KW-1185">Reference proteome</keyword>
<keyword id="KW-0677">Repeat</keyword>